<evidence type="ECO:0000255" key="1">
    <source>
        <dbReference type="HAMAP-Rule" id="MF_00338"/>
    </source>
</evidence>
<reference key="1">
    <citation type="journal article" date="2002" name="Proc. Natl. Acad. Sci. U.S.A.">
        <title>Complete genome sequence of Clostridium perfringens, an anaerobic flesh-eater.</title>
        <authorList>
            <person name="Shimizu T."/>
            <person name="Ohtani K."/>
            <person name="Hirakawa H."/>
            <person name="Ohshima K."/>
            <person name="Yamashita A."/>
            <person name="Shiba T."/>
            <person name="Ogasawara N."/>
            <person name="Hattori M."/>
            <person name="Kuhara S."/>
            <person name="Hayashi H."/>
        </authorList>
    </citation>
    <scope>NUCLEOTIDE SEQUENCE [LARGE SCALE GENOMIC DNA]</scope>
    <source>
        <strain>13 / Type A</strain>
    </source>
</reference>
<gene>
    <name type="ordered locus">CPE0882</name>
</gene>
<protein>
    <recommendedName>
        <fullName evidence="1">UPF0145 protein CPE0882</fullName>
    </recommendedName>
</protein>
<proteinExistence type="inferred from homology"/>
<organism>
    <name type="scientific">Clostridium perfringens (strain 13 / Type A)</name>
    <dbReference type="NCBI Taxonomy" id="195102"/>
    <lineage>
        <taxon>Bacteria</taxon>
        <taxon>Bacillati</taxon>
        <taxon>Bacillota</taxon>
        <taxon>Clostridia</taxon>
        <taxon>Eubacteriales</taxon>
        <taxon>Clostridiaceae</taxon>
        <taxon>Clostridium</taxon>
    </lineage>
</organism>
<dbReference type="EMBL" id="BA000016">
    <property type="protein sequence ID" value="BAB80588.1"/>
    <property type="molecule type" value="Genomic_DNA"/>
</dbReference>
<dbReference type="RefSeq" id="WP_011010096.1">
    <property type="nucleotide sequence ID" value="NC_003366.1"/>
</dbReference>
<dbReference type="SMR" id="Q8XM08"/>
<dbReference type="KEGG" id="cpe:CPE0882"/>
<dbReference type="HOGENOM" id="CLU_117144_1_2_9"/>
<dbReference type="Proteomes" id="UP000000818">
    <property type="component" value="Chromosome"/>
</dbReference>
<dbReference type="Gene3D" id="3.30.110.70">
    <property type="entry name" value="Hypothetical protein apc22750. Chain B"/>
    <property type="match status" value="1"/>
</dbReference>
<dbReference type="HAMAP" id="MF_00338">
    <property type="entry name" value="UPF0145"/>
    <property type="match status" value="1"/>
</dbReference>
<dbReference type="InterPro" id="IPR035439">
    <property type="entry name" value="UPF0145_dom_sf"/>
</dbReference>
<dbReference type="InterPro" id="IPR002765">
    <property type="entry name" value="UPF0145_YbjQ-like"/>
</dbReference>
<dbReference type="PANTHER" id="PTHR34068:SF2">
    <property type="entry name" value="UPF0145 PROTEIN SCO3412"/>
    <property type="match status" value="1"/>
</dbReference>
<dbReference type="PANTHER" id="PTHR34068">
    <property type="entry name" value="UPF0145 PROTEIN YBJQ"/>
    <property type="match status" value="1"/>
</dbReference>
<dbReference type="Pfam" id="PF01906">
    <property type="entry name" value="YbjQ_1"/>
    <property type="match status" value="1"/>
</dbReference>
<dbReference type="SUPFAM" id="SSF117782">
    <property type="entry name" value="YbjQ-like"/>
    <property type="match status" value="1"/>
</dbReference>
<keyword id="KW-1185">Reference proteome</keyword>
<comment type="similarity">
    <text evidence="1">Belongs to the UPF0145 family.</text>
</comment>
<sequence>MLVLTTETIPGKGIKEVKGLVKGSTVRCKNIGKDIASSFKNLVGGEMNSYTEILTEARQIAIGRMVDEAESLGANAIIEMRLVSSSLAAGAAEMVAYGTAVIYEDA</sequence>
<name>Y882_CLOPE</name>
<feature type="chain" id="PRO_0000138463" description="UPF0145 protein CPE0882">
    <location>
        <begin position="1"/>
        <end position="106"/>
    </location>
</feature>
<accession>Q8XM08</accession>